<comment type="function">
    <text evidence="1">May be involved in the biosynthesis of molybdopterin.</text>
</comment>
<comment type="pathway">
    <text>Cofactor biosynthesis; molybdopterin biosynthesis.</text>
</comment>
<comment type="similarity">
    <text evidence="2">Belongs to the MoaB/Mog family.</text>
</comment>
<dbReference type="EMBL" id="BX571856">
    <property type="protein sequence ID" value="CAG41340.1"/>
    <property type="molecule type" value="Genomic_DNA"/>
</dbReference>
<dbReference type="RefSeq" id="WP_000503824.1">
    <property type="nucleotide sequence ID" value="NC_002952.2"/>
</dbReference>
<dbReference type="SMR" id="Q6GEF9"/>
<dbReference type="KEGG" id="sar:SAR2359"/>
<dbReference type="HOGENOM" id="CLU_077358_2_3_9"/>
<dbReference type="UniPathway" id="UPA00344"/>
<dbReference type="Proteomes" id="UP000000596">
    <property type="component" value="Chromosome"/>
</dbReference>
<dbReference type="GO" id="GO:0005829">
    <property type="term" value="C:cytosol"/>
    <property type="evidence" value="ECO:0007669"/>
    <property type="project" value="TreeGrafter"/>
</dbReference>
<dbReference type="GO" id="GO:0006777">
    <property type="term" value="P:Mo-molybdopterin cofactor biosynthetic process"/>
    <property type="evidence" value="ECO:0007669"/>
    <property type="project" value="UniProtKB-KW"/>
</dbReference>
<dbReference type="CDD" id="cd00886">
    <property type="entry name" value="MogA_MoaB"/>
    <property type="match status" value="1"/>
</dbReference>
<dbReference type="FunFam" id="3.40.980.10:FF:000006">
    <property type="entry name" value="Molybdenum cofactor biosynthesis protein B"/>
    <property type="match status" value="1"/>
</dbReference>
<dbReference type="Gene3D" id="3.40.980.10">
    <property type="entry name" value="MoaB/Mog-like domain"/>
    <property type="match status" value="1"/>
</dbReference>
<dbReference type="InterPro" id="IPR012245">
    <property type="entry name" value="MoaB"/>
</dbReference>
<dbReference type="InterPro" id="IPR036425">
    <property type="entry name" value="MoaB/Mog-like_dom_sf"/>
</dbReference>
<dbReference type="InterPro" id="IPR001453">
    <property type="entry name" value="MoaB/Mog_dom"/>
</dbReference>
<dbReference type="InterPro" id="IPR008284">
    <property type="entry name" value="MoCF_biosynth_CS"/>
</dbReference>
<dbReference type="NCBIfam" id="TIGR00177">
    <property type="entry name" value="molyb_syn"/>
    <property type="match status" value="1"/>
</dbReference>
<dbReference type="PANTHER" id="PTHR43232">
    <property type="entry name" value="MOLYBDENUM COFACTOR BIOSYNTHESIS PROTEIN B"/>
    <property type="match status" value="1"/>
</dbReference>
<dbReference type="PANTHER" id="PTHR43232:SF2">
    <property type="entry name" value="MOLYBDENUM COFACTOR BIOSYNTHESIS PROTEIN B"/>
    <property type="match status" value="1"/>
</dbReference>
<dbReference type="Pfam" id="PF00994">
    <property type="entry name" value="MoCF_biosynth"/>
    <property type="match status" value="1"/>
</dbReference>
<dbReference type="PIRSF" id="PIRSF006443">
    <property type="entry name" value="MoaB"/>
    <property type="match status" value="1"/>
</dbReference>
<dbReference type="SMART" id="SM00852">
    <property type="entry name" value="MoCF_biosynth"/>
    <property type="match status" value="1"/>
</dbReference>
<dbReference type="SUPFAM" id="SSF53218">
    <property type="entry name" value="Molybdenum cofactor biosynthesis proteins"/>
    <property type="match status" value="1"/>
</dbReference>
<dbReference type="PROSITE" id="PS01078">
    <property type="entry name" value="MOCF_BIOSYNTHESIS_1"/>
    <property type="match status" value="1"/>
</dbReference>
<protein>
    <recommendedName>
        <fullName>Molybdenum cofactor biosynthesis protein B</fullName>
    </recommendedName>
</protein>
<accession>Q6GEF9</accession>
<sequence>MGEHQNVKLNRTVKAAVLTVSDTRNFDTDKGGQCVLQLLQVDNVEVSDAHYTIVKDEKVAITTQVKKWLEEDVDVIITTGGTGIAQRDVTIEAVKPLLTKEIEGFGELFRYLSYVEDVGTRALLSRAVAGTVNDKLIFSIPGSTGAVKLALEKLIKPELNHLIHELTK</sequence>
<name>MOAB_STAAR</name>
<feature type="chain" id="PRO_0000170975" description="Molybdenum cofactor biosynthesis protein B">
    <location>
        <begin position="1"/>
        <end position="168"/>
    </location>
</feature>
<keyword id="KW-0501">Molybdenum cofactor biosynthesis</keyword>
<proteinExistence type="inferred from homology"/>
<gene>
    <name type="primary">moaB</name>
    <name type="ordered locus">SAR2359</name>
</gene>
<organism>
    <name type="scientific">Staphylococcus aureus (strain MRSA252)</name>
    <dbReference type="NCBI Taxonomy" id="282458"/>
    <lineage>
        <taxon>Bacteria</taxon>
        <taxon>Bacillati</taxon>
        <taxon>Bacillota</taxon>
        <taxon>Bacilli</taxon>
        <taxon>Bacillales</taxon>
        <taxon>Staphylococcaceae</taxon>
        <taxon>Staphylococcus</taxon>
    </lineage>
</organism>
<evidence type="ECO:0000250" key="1"/>
<evidence type="ECO:0000305" key="2"/>
<reference key="1">
    <citation type="journal article" date="2004" name="Proc. Natl. Acad. Sci. U.S.A.">
        <title>Complete genomes of two clinical Staphylococcus aureus strains: evidence for the rapid evolution of virulence and drug resistance.</title>
        <authorList>
            <person name="Holden M.T.G."/>
            <person name="Feil E.J."/>
            <person name="Lindsay J.A."/>
            <person name="Peacock S.J."/>
            <person name="Day N.P.J."/>
            <person name="Enright M.C."/>
            <person name="Foster T.J."/>
            <person name="Moore C.E."/>
            <person name="Hurst L."/>
            <person name="Atkin R."/>
            <person name="Barron A."/>
            <person name="Bason N."/>
            <person name="Bentley S.D."/>
            <person name="Chillingworth C."/>
            <person name="Chillingworth T."/>
            <person name="Churcher C."/>
            <person name="Clark L."/>
            <person name="Corton C."/>
            <person name="Cronin A."/>
            <person name="Doggett J."/>
            <person name="Dowd L."/>
            <person name="Feltwell T."/>
            <person name="Hance Z."/>
            <person name="Harris B."/>
            <person name="Hauser H."/>
            <person name="Holroyd S."/>
            <person name="Jagels K."/>
            <person name="James K.D."/>
            <person name="Lennard N."/>
            <person name="Line A."/>
            <person name="Mayes R."/>
            <person name="Moule S."/>
            <person name="Mungall K."/>
            <person name="Ormond D."/>
            <person name="Quail M.A."/>
            <person name="Rabbinowitsch E."/>
            <person name="Rutherford K.M."/>
            <person name="Sanders M."/>
            <person name="Sharp S."/>
            <person name="Simmonds M."/>
            <person name="Stevens K."/>
            <person name="Whitehead S."/>
            <person name="Barrell B.G."/>
            <person name="Spratt B.G."/>
            <person name="Parkhill J."/>
        </authorList>
    </citation>
    <scope>NUCLEOTIDE SEQUENCE [LARGE SCALE GENOMIC DNA]</scope>
    <source>
        <strain>MRSA252</strain>
    </source>
</reference>